<gene>
    <name evidence="1" type="primary">mph1</name>
    <name type="ORF">ATEG_01952</name>
</gene>
<organism>
    <name type="scientific">Aspergillus terreus (strain NIH 2624 / FGSC A1156)</name>
    <dbReference type="NCBI Taxonomy" id="341663"/>
    <lineage>
        <taxon>Eukaryota</taxon>
        <taxon>Fungi</taxon>
        <taxon>Dikarya</taxon>
        <taxon>Ascomycota</taxon>
        <taxon>Pezizomycotina</taxon>
        <taxon>Eurotiomycetes</taxon>
        <taxon>Eurotiomycetidae</taxon>
        <taxon>Eurotiales</taxon>
        <taxon>Aspergillaceae</taxon>
        <taxon>Aspergillus</taxon>
        <taxon>Aspergillus subgen. Circumdati</taxon>
    </lineage>
</organism>
<comment type="function">
    <text evidence="2">ATP-dependent DNA helicase involved in DNA damage repair by homologous recombination and in genome maintenance. Capable of unwinding D-loops. Plays a role in limiting crossover recombinants during mitotic DNA double-strand break (DSB) repair. Component of a FANCM-MHF complex which promotes gene conversion at blocked replication forks, probably by reversal of the stalled fork.</text>
</comment>
<comment type="catalytic activity">
    <reaction evidence="2">
        <text>ATP + H2O = ADP + phosphate + H(+)</text>
        <dbReference type="Rhea" id="RHEA:13065"/>
        <dbReference type="ChEBI" id="CHEBI:15377"/>
        <dbReference type="ChEBI" id="CHEBI:15378"/>
        <dbReference type="ChEBI" id="CHEBI:30616"/>
        <dbReference type="ChEBI" id="CHEBI:43474"/>
        <dbReference type="ChEBI" id="CHEBI:456216"/>
        <dbReference type="EC" id="3.6.4.12"/>
    </reaction>
</comment>
<comment type="subunit">
    <text evidence="2">Interacts with the MHF histone-fold complex to form the FANCM-MHF complex.</text>
</comment>
<comment type="subcellular location">
    <subcellularLocation>
        <location evidence="1">Nucleus</location>
    </subcellularLocation>
</comment>
<comment type="similarity">
    <text evidence="6">Belongs to the DEAD box helicase family. DEAH subfamily. FANCM sub-subfamily.</text>
</comment>
<comment type="sequence caution" evidence="6">
    <conflict type="erroneous gene model prediction">
        <sequence resource="EMBL-CDS" id="EAU36914"/>
    </conflict>
</comment>
<sequence length="1100" mass="122805">MSDSDDYLQDDPDDQAFDDFADVASSPPPPKRRRLQARNQTRNTTSRRNEDNSVASDSDSFVVDDDDASKTDELPSPSQASYHFADHPENEASSKYKIFVPKRNNPQENIFVTQLTQPPSPPEMIRGPRWKKPDPPPPPPPAPTKPTPKTTRGPGHEDYGDDEDLDAAIAASLASFEEENSRLSFSTAQNSPPAPVASDNAPTNTAQTESFDFLDDIPDDAFDSDLSLTPPPPAPPSNSSRPSSFMQSSNRPLGVRQTTLFNMATRNQAPQPPQGEQVFAPPEKVEAPTQHKLNQEAISTWVYPTNLGKTRDYQFNITQKGLFHNLLVALPTGLGKTFIAATIMLNWFRWTRDAQIVFVAPTKPLVAQQVSACFGVAGIPRSQTTMLTGEAAPGIRAQEWQDKRVFFMTPQTLINDLKSGIADPKRIVLLVVDEAHRATGGYAYVEVVKFLRRYNQSFRVLALTATPGSTVESVQAVIDGLEISKVEIRTEQSLDIREYVHARNTEVQTFKNSEEMVLCMDLLSKTLQPLVDQLRTLNAYWGRDPMALTAYGLTKSRQQWMLSDAGRNSSFGLKGKVNAIFTVLASLAHGIDLLKYHGITPFYRHLLHFQGNTDGQKGGKYQRQIVQDEHFKKLMNHLSPWTKNPEFIGHPKLEYLKQVVLNHFMDAGEGSAGAEGASQSTTRVMIFVHFRDSAEEVARVLKRYEPMIRPQVFVGQASAKGSDGMNQKTQLGVVQKFKQGTYNTIVATSIGEEGLDIGEVDLIVCYDSSASPIRMLQRMGRTGRKRAGNIVLLLMEGKEEESYIKAKDNYEKMQQMIASGTRFTFHDDKSPRILPPGVKPIVDKRHIDIPEENEEQALPEPKRRGRVPKKPPKKFHMPDNVITGFTKASSLAGGSKRTAQDKRKARTPTPEPVDIPALEDVILTAEQQRELEHRYCTIGDTSPEVIRTPRTDAFPRLQLVSRPTKVVKHGSLTRRMIDALQKMDKTSSDCEGRFKEVLALESRRPAEESLIHQSISRPGNKKRLRKGRSGQPEPRLPPSRVHEEKDEDLDGSQPISPEQLLSSFTDRQGPKPFSSSPRSENLELDADFEAPDLDTLLGRR</sequence>
<keyword id="KW-0067">ATP-binding</keyword>
<keyword id="KW-0227">DNA damage</keyword>
<keyword id="KW-0234">DNA repair</keyword>
<keyword id="KW-0238">DNA-binding</keyword>
<keyword id="KW-0347">Helicase</keyword>
<keyword id="KW-0378">Hydrolase</keyword>
<keyword id="KW-0547">Nucleotide-binding</keyword>
<keyword id="KW-0539">Nucleus</keyword>
<keyword id="KW-1185">Reference proteome</keyword>
<dbReference type="EC" id="3.6.4.12" evidence="1 2"/>
<dbReference type="EMBL" id="CH476596">
    <property type="protein sequence ID" value="EAU36914.1"/>
    <property type="status" value="ALT_SEQ"/>
    <property type="molecule type" value="Genomic_DNA"/>
</dbReference>
<dbReference type="RefSeq" id="XP_001211130.1">
    <property type="nucleotide sequence ID" value="XM_001211130.1"/>
</dbReference>
<dbReference type="SMR" id="Q0CWI2"/>
<dbReference type="STRING" id="341663.Q0CWI2"/>
<dbReference type="GeneID" id="4316557"/>
<dbReference type="eggNOG" id="KOG0354">
    <property type="taxonomic scope" value="Eukaryota"/>
</dbReference>
<dbReference type="OrthoDB" id="164902at2759"/>
<dbReference type="Proteomes" id="UP000007963">
    <property type="component" value="Unassembled WGS sequence"/>
</dbReference>
<dbReference type="GO" id="GO:0005634">
    <property type="term" value="C:nucleus"/>
    <property type="evidence" value="ECO:0007669"/>
    <property type="project" value="UniProtKB-SubCell"/>
</dbReference>
<dbReference type="GO" id="GO:0043138">
    <property type="term" value="F:3'-5' DNA helicase activity"/>
    <property type="evidence" value="ECO:0007669"/>
    <property type="project" value="InterPro"/>
</dbReference>
<dbReference type="GO" id="GO:0005524">
    <property type="term" value="F:ATP binding"/>
    <property type="evidence" value="ECO:0007669"/>
    <property type="project" value="UniProtKB-KW"/>
</dbReference>
<dbReference type="GO" id="GO:0016887">
    <property type="term" value="F:ATP hydrolysis activity"/>
    <property type="evidence" value="ECO:0007669"/>
    <property type="project" value="RHEA"/>
</dbReference>
<dbReference type="GO" id="GO:0000400">
    <property type="term" value="F:four-way junction DNA binding"/>
    <property type="evidence" value="ECO:0007669"/>
    <property type="project" value="TreeGrafter"/>
</dbReference>
<dbReference type="GO" id="GO:0009378">
    <property type="term" value="F:four-way junction helicase activity"/>
    <property type="evidence" value="ECO:0007669"/>
    <property type="project" value="TreeGrafter"/>
</dbReference>
<dbReference type="GO" id="GO:0045003">
    <property type="term" value="P:double-strand break repair via synthesis-dependent strand annealing"/>
    <property type="evidence" value="ECO:0007669"/>
    <property type="project" value="TreeGrafter"/>
</dbReference>
<dbReference type="GO" id="GO:0036297">
    <property type="term" value="P:interstrand cross-link repair"/>
    <property type="evidence" value="ECO:0007669"/>
    <property type="project" value="TreeGrafter"/>
</dbReference>
<dbReference type="CDD" id="cd18033">
    <property type="entry name" value="DEXDc_FANCM"/>
    <property type="match status" value="1"/>
</dbReference>
<dbReference type="CDD" id="cd12091">
    <property type="entry name" value="FANCM_ID"/>
    <property type="match status" value="1"/>
</dbReference>
<dbReference type="CDD" id="cd18801">
    <property type="entry name" value="SF2_C_FANCM_Hef"/>
    <property type="match status" value="1"/>
</dbReference>
<dbReference type="FunFam" id="3.40.50.300:FF:000861">
    <property type="entry name" value="Fanconi anemia, complementation group M"/>
    <property type="match status" value="1"/>
</dbReference>
<dbReference type="Gene3D" id="1.20.1320.20">
    <property type="entry name" value="hef helicase domain"/>
    <property type="match status" value="1"/>
</dbReference>
<dbReference type="Gene3D" id="3.40.50.300">
    <property type="entry name" value="P-loop containing nucleotide triphosphate hydrolases"/>
    <property type="match status" value="2"/>
</dbReference>
<dbReference type="InterPro" id="IPR039686">
    <property type="entry name" value="FANCM/Mph1-like_ID"/>
</dbReference>
<dbReference type="InterPro" id="IPR044749">
    <property type="entry name" value="FANCM_DEXDc"/>
</dbReference>
<dbReference type="InterPro" id="IPR006935">
    <property type="entry name" value="Helicase/UvrB_N"/>
</dbReference>
<dbReference type="InterPro" id="IPR014001">
    <property type="entry name" value="Helicase_ATP-bd"/>
</dbReference>
<dbReference type="InterPro" id="IPR001650">
    <property type="entry name" value="Helicase_C-like"/>
</dbReference>
<dbReference type="InterPro" id="IPR027417">
    <property type="entry name" value="P-loop_NTPase"/>
</dbReference>
<dbReference type="InterPro" id="IPR003903">
    <property type="entry name" value="UIM_dom"/>
</dbReference>
<dbReference type="PANTHER" id="PTHR14025">
    <property type="entry name" value="FANCONI ANEMIA GROUP M FANCM FAMILY MEMBER"/>
    <property type="match status" value="1"/>
</dbReference>
<dbReference type="PANTHER" id="PTHR14025:SF20">
    <property type="entry name" value="FANCONI ANEMIA GROUP M PROTEIN"/>
    <property type="match status" value="1"/>
</dbReference>
<dbReference type="Pfam" id="PF00271">
    <property type="entry name" value="Helicase_C"/>
    <property type="match status" value="1"/>
</dbReference>
<dbReference type="Pfam" id="PF04851">
    <property type="entry name" value="ResIII"/>
    <property type="match status" value="1"/>
</dbReference>
<dbReference type="SMART" id="SM00487">
    <property type="entry name" value="DEXDc"/>
    <property type="match status" value="1"/>
</dbReference>
<dbReference type="SMART" id="SM00490">
    <property type="entry name" value="HELICc"/>
    <property type="match status" value="1"/>
</dbReference>
<dbReference type="SUPFAM" id="SSF52540">
    <property type="entry name" value="P-loop containing nucleoside triphosphate hydrolases"/>
    <property type="match status" value="1"/>
</dbReference>
<dbReference type="PROSITE" id="PS51192">
    <property type="entry name" value="HELICASE_ATP_BIND_1"/>
    <property type="match status" value="1"/>
</dbReference>
<dbReference type="PROSITE" id="PS51194">
    <property type="entry name" value="HELICASE_CTER"/>
    <property type="match status" value="1"/>
</dbReference>
<evidence type="ECO:0000250" key="1">
    <source>
        <dbReference type="UniProtKB" id="P40562"/>
    </source>
</evidence>
<evidence type="ECO:0000250" key="2">
    <source>
        <dbReference type="UniProtKB" id="Q9UT23"/>
    </source>
</evidence>
<evidence type="ECO:0000255" key="3">
    <source>
        <dbReference type="PROSITE-ProRule" id="PRU00541"/>
    </source>
</evidence>
<evidence type="ECO:0000255" key="4">
    <source>
        <dbReference type="PROSITE-ProRule" id="PRU00542"/>
    </source>
</evidence>
<evidence type="ECO:0000256" key="5">
    <source>
        <dbReference type="SAM" id="MobiDB-lite"/>
    </source>
</evidence>
<evidence type="ECO:0000305" key="6"/>
<protein>
    <recommendedName>
        <fullName evidence="1">ATP-dependent DNA helicase mph1</fullName>
        <ecNumber evidence="1 2">3.6.4.12</ecNumber>
    </recommendedName>
    <alternativeName>
        <fullName evidence="2">FANCM-like protein 1</fullName>
    </alternativeName>
</protein>
<reference key="1">
    <citation type="submission" date="2005-09" db="EMBL/GenBank/DDBJ databases">
        <title>Annotation of the Aspergillus terreus NIH2624 genome.</title>
        <authorList>
            <person name="Birren B.W."/>
            <person name="Lander E.S."/>
            <person name="Galagan J.E."/>
            <person name="Nusbaum C."/>
            <person name="Devon K."/>
            <person name="Henn M."/>
            <person name="Ma L.-J."/>
            <person name="Jaffe D.B."/>
            <person name="Butler J."/>
            <person name="Alvarez P."/>
            <person name="Gnerre S."/>
            <person name="Grabherr M."/>
            <person name="Kleber M."/>
            <person name="Mauceli E.W."/>
            <person name="Brockman W."/>
            <person name="Rounsley S."/>
            <person name="Young S.K."/>
            <person name="LaButti K."/>
            <person name="Pushparaj V."/>
            <person name="DeCaprio D."/>
            <person name="Crawford M."/>
            <person name="Koehrsen M."/>
            <person name="Engels R."/>
            <person name="Montgomery P."/>
            <person name="Pearson M."/>
            <person name="Howarth C."/>
            <person name="Larson L."/>
            <person name="Luoma S."/>
            <person name="White J."/>
            <person name="Alvarado L."/>
            <person name="Kodira C.D."/>
            <person name="Zeng Q."/>
            <person name="Oleary S."/>
            <person name="Yandava C."/>
            <person name="Denning D.W."/>
            <person name="Nierman W.C."/>
            <person name="Milne T."/>
            <person name="Madden K."/>
        </authorList>
    </citation>
    <scope>NUCLEOTIDE SEQUENCE [LARGE SCALE GENOMIC DNA]</scope>
    <source>
        <strain>NIH 2624 / FGSC A1156</strain>
    </source>
</reference>
<feature type="chain" id="PRO_0000333368" description="ATP-dependent DNA helicase mph1">
    <location>
        <begin position="1"/>
        <end position="1100"/>
    </location>
</feature>
<feature type="domain" description="Helicase ATP-binding" evidence="3">
    <location>
        <begin position="317"/>
        <end position="485"/>
    </location>
</feature>
<feature type="domain" description="Helicase C-terminal" evidence="4">
    <location>
        <begin position="655"/>
        <end position="829"/>
    </location>
</feature>
<feature type="region of interest" description="Disordered" evidence="5">
    <location>
        <begin position="1"/>
        <end position="250"/>
    </location>
</feature>
<feature type="region of interest" description="Disordered" evidence="5">
    <location>
        <begin position="850"/>
        <end position="913"/>
    </location>
</feature>
<feature type="region of interest" description="Disordered" evidence="5">
    <location>
        <begin position="1003"/>
        <end position="1100"/>
    </location>
</feature>
<feature type="short sequence motif" description="DEAH box" evidence="3">
    <location>
        <begin position="433"/>
        <end position="436"/>
    </location>
</feature>
<feature type="compositionally biased region" description="Acidic residues" evidence="5">
    <location>
        <begin position="1"/>
        <end position="21"/>
    </location>
</feature>
<feature type="compositionally biased region" description="Low complexity" evidence="5">
    <location>
        <begin position="38"/>
        <end position="61"/>
    </location>
</feature>
<feature type="compositionally biased region" description="Basic and acidic residues" evidence="5">
    <location>
        <begin position="84"/>
        <end position="94"/>
    </location>
</feature>
<feature type="compositionally biased region" description="Polar residues" evidence="5">
    <location>
        <begin position="104"/>
        <end position="117"/>
    </location>
</feature>
<feature type="compositionally biased region" description="Pro residues" evidence="5">
    <location>
        <begin position="135"/>
        <end position="146"/>
    </location>
</feature>
<feature type="compositionally biased region" description="Polar residues" evidence="5">
    <location>
        <begin position="182"/>
        <end position="191"/>
    </location>
</feature>
<feature type="compositionally biased region" description="Polar residues" evidence="5">
    <location>
        <begin position="200"/>
        <end position="209"/>
    </location>
</feature>
<feature type="compositionally biased region" description="Acidic residues" evidence="5">
    <location>
        <begin position="212"/>
        <end position="223"/>
    </location>
</feature>
<feature type="compositionally biased region" description="Low complexity" evidence="5">
    <location>
        <begin position="237"/>
        <end position="249"/>
    </location>
</feature>
<feature type="compositionally biased region" description="Basic residues" evidence="5">
    <location>
        <begin position="863"/>
        <end position="875"/>
    </location>
</feature>
<feature type="compositionally biased region" description="Basic residues" evidence="5">
    <location>
        <begin position="1019"/>
        <end position="1028"/>
    </location>
</feature>
<feature type="compositionally biased region" description="Polar residues" evidence="5">
    <location>
        <begin position="1053"/>
        <end position="1066"/>
    </location>
</feature>
<feature type="compositionally biased region" description="Acidic residues" evidence="5">
    <location>
        <begin position="1082"/>
        <end position="1092"/>
    </location>
</feature>
<feature type="binding site" evidence="3">
    <location>
        <begin position="330"/>
        <end position="337"/>
    </location>
    <ligand>
        <name>ATP</name>
        <dbReference type="ChEBI" id="CHEBI:30616"/>
    </ligand>
</feature>
<name>MPH1_ASPTN</name>
<proteinExistence type="inferred from homology"/>
<accession>Q0CWI2</accession>